<comment type="function">
    <text evidence="1 3">Subunit 8, of the mitochondrial membrane ATP synthase complex (F(1)F(0) ATP synthase or Complex V) that produces ATP from ADP in the presence of a proton gradient across the membrane which is generated by electron transport complexes of the respiratory chain. ATP synthase complex consist of a soluble F(1) head domain - the catalytic core - and a membrane F(1) domain - the membrane proton channel. These two domains are linked by a central stalk rotating inside the F(1) region and a stationary peripheral stalk. During catalysis, ATP synthesis in the catalytic domain of F(1) is coupled via a rotary mechanism of the central stalk subunits to proton translocation (By similarity). In vivo, can only synthesize ATP although its ATP hydrolase activity can be activated artificially in vitro (By similarity). Part of the complex F(0) domain (By similarity).</text>
</comment>
<comment type="subunit">
    <text evidence="1">Component of the ATP synthase complex composed at least of ATP5F1A/subunit alpha, ATP5F1B/subunit beta, ATP5MC1/subunit c (homooctomer), MT-ATP6/subunit a, MT-ATP8/subunit 8, ATP5ME/subunit e, ATP5MF/subunit f, ATP5MG/subunit g, ATP5MK/subunit k, ATP5MJ/subunit j, ATP5F1C/subunit gamma, ATP5F1D/subunit delta, ATP5F1E/subunit epsilon, ATP5PF/subunit F6, ATP5PB/subunit b, ATP5PD/subunit d, ATP5PO/subunit OSCP. ATP synthase complex consists of a soluble F(1) head domain (subunits alpha(3) and beta(3)) - the catalytic core - and a membrane F(0) domain - the membrane proton channel (subunits c, a, 8, e, f, g, k and j). These two domains are linked by a central stalk (subunits gamma, delta, and epsilon) rotating inside the F1 region and a stationary peripheral stalk (subunits F6, b, d, and OSCP). Interacts with PRICKLE3.</text>
</comment>
<comment type="subcellular location">
    <subcellularLocation>
        <location>Mitochondrion membrane</location>
        <topology>Single-pass membrane protein</topology>
    </subcellularLocation>
</comment>
<comment type="similarity">
    <text evidence="5">Belongs to the ATPase protein 8 family.</text>
</comment>
<dbReference type="EMBL" id="Y18001">
    <property type="protein sequence ID" value="CAA76998.1"/>
    <property type="molecule type" value="Genomic_DNA"/>
</dbReference>
<dbReference type="PIR" id="T11510">
    <property type="entry name" value="T11510"/>
</dbReference>
<dbReference type="RefSeq" id="NP_008462.1">
    <property type="nucleotide sequence ID" value="NC_001992.1"/>
</dbReference>
<dbReference type="SMR" id="Q9ZXY0"/>
<dbReference type="GeneID" id="808330"/>
<dbReference type="CTD" id="4509"/>
<dbReference type="GO" id="GO:0031966">
    <property type="term" value="C:mitochondrial membrane"/>
    <property type="evidence" value="ECO:0007669"/>
    <property type="project" value="UniProtKB-SubCell"/>
</dbReference>
<dbReference type="GO" id="GO:0045259">
    <property type="term" value="C:proton-transporting ATP synthase complex"/>
    <property type="evidence" value="ECO:0000250"/>
    <property type="project" value="UniProtKB"/>
</dbReference>
<dbReference type="GO" id="GO:0015078">
    <property type="term" value="F:proton transmembrane transporter activity"/>
    <property type="evidence" value="ECO:0007669"/>
    <property type="project" value="InterPro"/>
</dbReference>
<dbReference type="GO" id="GO:0015986">
    <property type="term" value="P:proton motive force-driven ATP synthesis"/>
    <property type="evidence" value="ECO:0007669"/>
    <property type="project" value="InterPro"/>
</dbReference>
<dbReference type="InterPro" id="IPR039017">
    <property type="entry name" value="ATP8_mammal"/>
</dbReference>
<dbReference type="InterPro" id="IPR001421">
    <property type="entry name" value="ATP8_metazoa"/>
</dbReference>
<dbReference type="PANTHER" id="PTHR13722">
    <property type="entry name" value="ATP SYNTHASE PROTEIN 8"/>
    <property type="match status" value="1"/>
</dbReference>
<dbReference type="PANTHER" id="PTHR13722:SF0">
    <property type="entry name" value="ATP SYNTHASE PROTEIN 8"/>
    <property type="match status" value="1"/>
</dbReference>
<dbReference type="Pfam" id="PF00895">
    <property type="entry name" value="ATP-synt_8"/>
    <property type="match status" value="1"/>
</dbReference>
<geneLocation type="mitochondrion"/>
<keyword id="KW-0007">Acetylation</keyword>
<keyword id="KW-0066">ATP synthesis</keyword>
<keyword id="KW-0138">CF(0)</keyword>
<keyword id="KW-0375">Hydrogen ion transport</keyword>
<keyword id="KW-0406">Ion transport</keyword>
<keyword id="KW-0472">Membrane</keyword>
<keyword id="KW-0496">Mitochondrion</keyword>
<keyword id="KW-0812">Transmembrane</keyword>
<keyword id="KW-1133">Transmembrane helix</keyword>
<keyword id="KW-0813">Transport</keyword>
<evidence type="ECO:0000250" key="1">
    <source>
        <dbReference type="UniProtKB" id="P03928"/>
    </source>
</evidence>
<evidence type="ECO:0000250" key="2">
    <source>
        <dbReference type="UniProtKB" id="P03930"/>
    </source>
</evidence>
<evidence type="ECO:0000250" key="3">
    <source>
        <dbReference type="UniProtKB" id="P19483"/>
    </source>
</evidence>
<evidence type="ECO:0000255" key="4"/>
<evidence type="ECO:0000305" key="5"/>
<organism>
    <name type="scientific">Papio hamadryas</name>
    <name type="common">Hamadryas baboon</name>
    <dbReference type="NCBI Taxonomy" id="9557"/>
    <lineage>
        <taxon>Eukaryota</taxon>
        <taxon>Metazoa</taxon>
        <taxon>Chordata</taxon>
        <taxon>Craniata</taxon>
        <taxon>Vertebrata</taxon>
        <taxon>Euteleostomi</taxon>
        <taxon>Mammalia</taxon>
        <taxon>Eutheria</taxon>
        <taxon>Euarchontoglires</taxon>
        <taxon>Primates</taxon>
        <taxon>Haplorrhini</taxon>
        <taxon>Catarrhini</taxon>
        <taxon>Cercopithecidae</taxon>
        <taxon>Cercopithecinae</taxon>
        <taxon>Papio</taxon>
    </lineage>
</organism>
<reference key="1">
    <citation type="journal article" date="1998" name="J. Mol. Evol.">
        <title>Molecular timing of primate divergences as estimated by two nonprimate calibration points.</title>
        <authorList>
            <person name="Arnason U."/>
            <person name="Gullberg A."/>
            <person name="Janke A."/>
        </authorList>
    </citation>
    <scope>NUCLEOTIDE SEQUENCE [GENOMIC DNA]</scope>
</reference>
<feature type="chain" id="PRO_0000195562" description="ATP synthase F(0) complex subunit 8">
    <location>
        <begin position="1"/>
        <end position="68"/>
    </location>
</feature>
<feature type="transmembrane region" description="Helical" evidence="4">
    <location>
        <begin position="8"/>
        <end position="24"/>
    </location>
</feature>
<feature type="modified residue" description="N6-acetyllysine; alternate" evidence="2">
    <location>
        <position position="54"/>
    </location>
</feature>
<feature type="modified residue" description="N6-succinyllysine; alternate" evidence="2">
    <location>
        <position position="54"/>
    </location>
</feature>
<feature type="modified residue" description="N6-acetyllysine" evidence="2">
    <location>
        <position position="57"/>
    </location>
</feature>
<name>ATP8_PAPHA</name>
<proteinExistence type="inferred from homology"/>
<protein>
    <recommendedName>
        <fullName evidence="1">ATP synthase F(0) complex subunit 8</fullName>
    </recommendedName>
    <alternativeName>
        <fullName>A6L</fullName>
    </alternativeName>
    <alternativeName>
        <fullName>F-ATPase subunit 8</fullName>
    </alternativeName>
</protein>
<sequence length="68" mass="8094">MPQLDTSTWFTIIMAMLPTLYLITQLKLLSMNYYQPPLTKNPNLQTHNTCWRPKWTKTYLPHSQPQQS</sequence>
<gene>
    <name evidence="1" type="primary">MT-ATP8</name>
    <name type="synonym">ATP8</name>
    <name type="synonym">ATPASE8</name>
    <name type="synonym">MTATP8</name>
</gene>
<accession>Q9ZXY0</accession>